<organism>
    <name type="scientific">Salmonella typhimurium (strain LT2 / SGSC1412 / ATCC 700720)</name>
    <dbReference type="NCBI Taxonomy" id="99287"/>
    <lineage>
        <taxon>Bacteria</taxon>
        <taxon>Pseudomonadati</taxon>
        <taxon>Pseudomonadota</taxon>
        <taxon>Gammaproteobacteria</taxon>
        <taxon>Enterobacterales</taxon>
        <taxon>Enterobacteriaceae</taxon>
        <taxon>Salmonella</taxon>
    </lineage>
</organism>
<protein>
    <recommendedName>
        <fullName>Bifunctional adenosylcobalamin biosynthesis protein CobU</fullName>
    </recommendedName>
    <alternativeName>
        <fullName>Adenosylcobinamide kinase</fullName>
        <ecNumber evidence="2 3">2.7.1.156</ecNumber>
    </alternativeName>
    <alternativeName>
        <fullName>Adenosylcobinamide-phosphate guanylyltransferase</fullName>
        <ecNumber evidence="2 3">2.7.7.62</ecNumber>
    </alternativeName>
</protein>
<proteinExistence type="evidence at protein level"/>
<evidence type="ECO:0000269" key="1">
    <source>
    </source>
</evidence>
<evidence type="ECO:0000269" key="2">
    <source>
    </source>
</evidence>
<evidence type="ECO:0000269" key="3">
    <source>
    </source>
</evidence>
<evidence type="ECO:0000269" key="4">
    <source>
    </source>
</evidence>
<evidence type="ECO:0000305" key="5"/>
<evidence type="ECO:0007829" key="6">
    <source>
        <dbReference type="PDB" id="1C9K"/>
    </source>
</evidence>
<evidence type="ECO:0007829" key="7">
    <source>
        <dbReference type="PDB" id="1CBU"/>
    </source>
</evidence>
<gene>
    <name type="primary">cobU</name>
    <name type="ordered locus">STM2018</name>
</gene>
<keyword id="KW-0002">3D-structure</keyword>
<keyword id="KW-0067">ATP-binding</keyword>
<keyword id="KW-0169">Cobalamin biosynthesis</keyword>
<keyword id="KW-0903">Direct protein sequencing</keyword>
<keyword id="KW-0342">GTP-binding</keyword>
<keyword id="KW-0418">Kinase</keyword>
<keyword id="KW-0547">Nucleotide-binding</keyword>
<keyword id="KW-1185">Reference proteome</keyword>
<keyword id="KW-0808">Transferase</keyword>
<feature type="chain" id="PRO_0000089998" description="Bifunctional adenosylcobalamin biosynthesis protein CobU">
    <location>
        <begin position="1"/>
        <end position="181"/>
    </location>
</feature>
<feature type="active site" description="GMP-histidine intermediate" evidence="1">
    <location>
        <position position="47"/>
    </location>
</feature>
<feature type="binding site">
    <location>
        <begin position="7"/>
        <end position="14"/>
    </location>
    <ligand>
        <name>GTP</name>
        <dbReference type="ChEBI" id="CHEBI:37565"/>
    </ligand>
</feature>
<feature type="binding site">
    <location>
        <begin position="31"/>
        <end position="33"/>
    </location>
    <ligand>
        <name>GTP</name>
        <dbReference type="ChEBI" id="CHEBI:37565"/>
    </ligand>
</feature>
<feature type="binding site">
    <location>
        <begin position="48"/>
        <end position="51"/>
    </location>
    <ligand>
        <name>GTP</name>
        <dbReference type="ChEBI" id="CHEBI:37565"/>
    </ligand>
</feature>
<feature type="binding site">
    <location>
        <position position="59"/>
    </location>
    <ligand>
        <name>GTP</name>
        <dbReference type="ChEBI" id="CHEBI:37565"/>
    </ligand>
</feature>
<feature type="binding site">
    <location>
        <position position="81"/>
    </location>
    <ligand>
        <name>GTP</name>
        <dbReference type="ChEBI" id="CHEBI:37565"/>
    </ligand>
</feature>
<feature type="mutagenesis site" description="3-5 fold reduction in activity." evidence="2">
    <original>H</original>
    <variation>A</variation>
    <location>
        <position position="46"/>
    </location>
</feature>
<feature type="mutagenesis site" description="No activity; when associated with Ala-47." evidence="2">
    <original>H</original>
    <variation>A</variation>
    <location>
        <position position="46"/>
    </location>
</feature>
<feature type="mutagenesis site" description="Almost no residual activity." evidence="2">
    <original>H</original>
    <variation>A</variation>
    <location>
        <position position="47"/>
    </location>
</feature>
<feature type="mutagenesis site" description="No activity; when associated with Ala-46." evidence="2">
    <original>H</original>
    <variation>A</variation>
    <location>
        <position position="47"/>
    </location>
</feature>
<feature type="mutagenesis site" description="Very little residual activity." evidence="2">
    <original>H</original>
    <variation>N</variation>
    <location>
        <position position="47"/>
    </location>
</feature>
<feature type="strand" evidence="6">
    <location>
        <begin position="3"/>
        <end position="7"/>
    </location>
</feature>
<feature type="helix" evidence="6">
    <location>
        <begin position="13"/>
        <end position="21"/>
    </location>
</feature>
<feature type="strand" evidence="6">
    <location>
        <begin position="25"/>
        <end position="31"/>
    </location>
</feature>
<feature type="helix" evidence="6">
    <location>
        <begin position="38"/>
        <end position="41"/>
    </location>
</feature>
<feature type="helix" evidence="6">
    <location>
        <begin position="43"/>
        <end position="49"/>
    </location>
</feature>
<feature type="strand" evidence="6">
    <location>
        <begin position="55"/>
        <end position="58"/>
    </location>
</feature>
<feature type="helix" evidence="6">
    <location>
        <begin position="64"/>
        <end position="66"/>
    </location>
</feature>
<feature type="strand" evidence="6">
    <location>
        <begin position="77"/>
        <end position="81"/>
    </location>
</feature>
<feature type="helix" evidence="6">
    <location>
        <begin position="83"/>
        <end position="93"/>
    </location>
</feature>
<feature type="helix" evidence="7">
    <location>
        <begin position="100"/>
        <end position="102"/>
    </location>
</feature>
<feature type="helix" evidence="6">
    <location>
        <begin position="105"/>
        <end position="125"/>
    </location>
</feature>
<feature type="strand" evidence="6">
    <location>
        <begin position="128"/>
        <end position="133"/>
    </location>
</feature>
<feature type="helix" evidence="6">
    <location>
        <begin position="146"/>
        <end position="165"/>
    </location>
</feature>
<feature type="strand" evidence="6">
    <location>
        <begin position="167"/>
        <end position="173"/>
    </location>
</feature>
<feature type="strand" evidence="6">
    <location>
        <begin position="176"/>
        <end position="179"/>
    </location>
</feature>
<name>COBU_SALTY</name>
<dbReference type="EC" id="2.7.1.156" evidence="2 3"/>
<dbReference type="EC" id="2.7.7.62" evidence="2 3"/>
<dbReference type="EMBL" id="L12006">
    <property type="protein sequence ID" value="AAA27269.1"/>
    <property type="status" value="ALT_INIT"/>
    <property type="molecule type" value="Genomic_DNA"/>
</dbReference>
<dbReference type="EMBL" id="AE006468">
    <property type="protein sequence ID" value="AAL20922.1"/>
    <property type="molecule type" value="Genomic_DNA"/>
</dbReference>
<dbReference type="RefSeq" id="NP_460963.1">
    <property type="nucleotide sequence ID" value="NC_003197.2"/>
</dbReference>
<dbReference type="RefSeq" id="WP_000973145.1">
    <property type="nucleotide sequence ID" value="NC_003197.2"/>
</dbReference>
<dbReference type="PDB" id="1C9K">
    <property type="method" value="X-ray"/>
    <property type="resolution" value="2.20 A"/>
    <property type="chains" value="A/B/C=2-181"/>
</dbReference>
<dbReference type="PDB" id="1CBU">
    <property type="method" value="X-ray"/>
    <property type="resolution" value="2.30 A"/>
    <property type="chains" value="A/B/C=2-181"/>
</dbReference>
<dbReference type="PDBsum" id="1C9K"/>
<dbReference type="PDBsum" id="1CBU"/>
<dbReference type="SMR" id="Q05599"/>
<dbReference type="STRING" id="99287.STM2018"/>
<dbReference type="DrugBank" id="DB00115">
    <property type="generic name" value="Cyanocobalamin"/>
</dbReference>
<dbReference type="DrugBank" id="DB01972">
    <property type="generic name" value="Guanosine-5'-Monophosphate"/>
</dbReference>
<dbReference type="PaxDb" id="99287-STM2018"/>
<dbReference type="GeneID" id="1253539"/>
<dbReference type="KEGG" id="stm:STM2018"/>
<dbReference type="PATRIC" id="fig|99287.12.peg.2140"/>
<dbReference type="HOGENOM" id="CLU_094161_0_2_6"/>
<dbReference type="OMA" id="NELGMGI"/>
<dbReference type="PhylomeDB" id="Q05599"/>
<dbReference type="BioCyc" id="MetaCyc:MONOMER-13215"/>
<dbReference type="BioCyc" id="SENT99287:STM2018-MONOMER"/>
<dbReference type="UniPathway" id="UPA00148">
    <property type="reaction ID" value="UER00236"/>
</dbReference>
<dbReference type="UniPathway" id="UPA00148">
    <property type="reaction ID" value="UER00237"/>
</dbReference>
<dbReference type="EvolutionaryTrace" id="Q05599"/>
<dbReference type="Proteomes" id="UP000001014">
    <property type="component" value="Chromosome"/>
</dbReference>
<dbReference type="GO" id="GO:0043752">
    <property type="term" value="F:adenosylcobinamide kinase activity"/>
    <property type="evidence" value="ECO:0007669"/>
    <property type="project" value="UniProtKB-EC"/>
</dbReference>
<dbReference type="GO" id="GO:0005524">
    <property type="term" value="F:ATP binding"/>
    <property type="evidence" value="ECO:0007669"/>
    <property type="project" value="UniProtKB-KW"/>
</dbReference>
<dbReference type="GO" id="GO:0008820">
    <property type="term" value="F:cobinamide phosphate guanylyltransferase activity"/>
    <property type="evidence" value="ECO:0007669"/>
    <property type="project" value="UniProtKB-EC"/>
</dbReference>
<dbReference type="GO" id="GO:0005525">
    <property type="term" value="F:GTP binding"/>
    <property type="evidence" value="ECO:0007669"/>
    <property type="project" value="UniProtKB-KW"/>
</dbReference>
<dbReference type="GO" id="GO:0009236">
    <property type="term" value="P:cobalamin biosynthetic process"/>
    <property type="evidence" value="ECO:0007669"/>
    <property type="project" value="UniProtKB-UniPathway"/>
</dbReference>
<dbReference type="CDD" id="cd00544">
    <property type="entry name" value="CobU"/>
    <property type="match status" value="1"/>
</dbReference>
<dbReference type="FunFam" id="3.40.50.300:FF:000632">
    <property type="entry name" value="Bifunctional adenosylcobalamin biosynthesis protein"/>
    <property type="match status" value="1"/>
</dbReference>
<dbReference type="Gene3D" id="3.40.50.300">
    <property type="entry name" value="P-loop containing nucleotide triphosphate hydrolases"/>
    <property type="match status" value="1"/>
</dbReference>
<dbReference type="InterPro" id="IPR003203">
    <property type="entry name" value="CobU/CobP"/>
</dbReference>
<dbReference type="InterPro" id="IPR027417">
    <property type="entry name" value="P-loop_NTPase"/>
</dbReference>
<dbReference type="NCBIfam" id="NF004469">
    <property type="entry name" value="PRK05800.1"/>
    <property type="match status" value="1"/>
</dbReference>
<dbReference type="PANTHER" id="PTHR34848">
    <property type="match status" value="1"/>
</dbReference>
<dbReference type="PANTHER" id="PTHR34848:SF1">
    <property type="entry name" value="BIFUNCTIONAL ADENOSYLCOBALAMIN BIOSYNTHESIS PROTEIN COBU"/>
    <property type="match status" value="1"/>
</dbReference>
<dbReference type="Pfam" id="PF02283">
    <property type="entry name" value="CobU"/>
    <property type="match status" value="1"/>
</dbReference>
<dbReference type="PIRSF" id="PIRSF006135">
    <property type="entry name" value="CobU"/>
    <property type="match status" value="1"/>
</dbReference>
<dbReference type="SUPFAM" id="SSF52540">
    <property type="entry name" value="P-loop containing nucleoside triphosphate hydrolases"/>
    <property type="match status" value="1"/>
</dbReference>
<reference key="1">
    <citation type="journal article" date="1993" name="J. Bacteriol.">
        <title>Characterization of the cobalamin (vitamin B12) biosynthetic genes of Salmonella typhimurium.</title>
        <authorList>
            <person name="Roth J.R."/>
            <person name="Lawrence J.G."/>
            <person name="Rubenfield M."/>
            <person name="Kieffer-Higgins S."/>
            <person name="Church G.M."/>
        </authorList>
    </citation>
    <scope>NUCLEOTIDE SEQUENCE [GENOMIC DNA]</scope>
    <source>
        <strain>LT2</strain>
    </source>
</reference>
<reference key="2">
    <citation type="journal article" date="2001" name="Nature">
        <title>Complete genome sequence of Salmonella enterica serovar Typhimurium LT2.</title>
        <authorList>
            <person name="McClelland M."/>
            <person name="Sanderson K.E."/>
            <person name="Spieth J."/>
            <person name="Clifton S.W."/>
            <person name="Latreille P."/>
            <person name="Courtney L."/>
            <person name="Porwollik S."/>
            <person name="Ali J."/>
            <person name="Dante M."/>
            <person name="Du F."/>
            <person name="Hou S."/>
            <person name="Layman D."/>
            <person name="Leonard S."/>
            <person name="Nguyen C."/>
            <person name="Scott K."/>
            <person name="Holmes A."/>
            <person name="Grewal N."/>
            <person name="Mulvaney E."/>
            <person name="Ryan E."/>
            <person name="Sun H."/>
            <person name="Florea L."/>
            <person name="Miller W."/>
            <person name="Stoneking T."/>
            <person name="Nhan M."/>
            <person name="Waterston R."/>
            <person name="Wilson R.K."/>
        </authorList>
    </citation>
    <scope>NUCLEOTIDE SEQUENCE [LARGE SCALE GENOMIC DNA]</scope>
    <source>
        <strain>LT2 / SGSC1412 / ATCC 700720</strain>
    </source>
</reference>
<reference key="3">
    <citation type="journal article" date="1995" name="J. Biol. Chem.">
        <title>Purification and characterization of the bifunctional CobU enzyme of Salmonella typhimurium LT2. Evidence for a CobU-GMP intermediate.</title>
        <authorList>
            <person name="O'Toole G.A."/>
            <person name="Escalante-Semerena J.C."/>
        </authorList>
    </citation>
    <scope>PROTEIN SEQUENCE OF N-TERMINUS</scope>
    <scope>FUNCTION</scope>
    <scope>CATALYTIC ACTIVITY</scope>
    <scope>BIOPHYSICOCHEMICAL PROPERTIES</scope>
    <scope>SUBSTRATE SPECIFICITY</scope>
    <source>
        <strain>LT2</strain>
    </source>
</reference>
<reference key="4">
    <citation type="journal article" date="2000" name="J. Biol. Chem.">
        <title>Analysis of the adenosylcobinamide kinase/adenosylcobinamide-phosphate guanylyltransferase (CobU) enzyme of Salmonella typhimurium LT2. Identification of residue His-46 as the site of guanylylation.</title>
        <authorList>
            <person name="Thomas M.G."/>
            <person name="Thompson T.B."/>
            <person name="Rayment I."/>
            <person name="Escalante-Semerena J.C."/>
        </authorList>
    </citation>
    <scope>CATALYTIC ACTIVITY</scope>
    <scope>MUTAGENESIS OF HIS-46 AND HIS-47</scope>
    <source>
        <strain>LT2</strain>
    </source>
</reference>
<reference key="5">
    <citation type="journal article" date="1998" name="Biochemistry">
        <title>Three-dimensional structure of adenosylcobinamide kinase/adenosylcobinamide phosphate guanylyltransferase from Salmonella typhimurium determined to 2.3-A resolution.</title>
        <authorList>
            <person name="Thompson T.B."/>
            <person name="Thomas M.G."/>
            <person name="Escalante-Semerena J.C."/>
            <person name="Rayment I."/>
        </authorList>
    </citation>
    <scope>X-RAY CRYSTALLOGRAPHY (2.3 ANGSTROMS)</scope>
    <scope>SUBUNIT</scope>
    <source>
        <strain>LT2</strain>
    </source>
</reference>
<reference key="6">
    <citation type="journal article" date="1999" name="Biochemistry">
        <title>Three-dimensional structure of adenosylcobinamide kinase/adenosylcobinamide phosphate guanylyltransferase (CobU) complexed with GMP: evidence for a substrate-induced transferase active site.</title>
        <authorList>
            <person name="Thompson T.B."/>
            <person name="Thomas M.G."/>
            <person name="Escalante-Semerena J.C."/>
            <person name="Rayment I."/>
        </authorList>
    </citation>
    <scope>X-RAY CRYSTALLOGRAPHY (2.2 ANGSTROMS) IN COMPLEX WITH GMP AND PHOSPHATE</scope>
    <scope>ACTIVE SITE</scope>
</reference>
<comment type="function">
    <text evidence="3">Catalyzes ATP-dependent phosphorylation of adenosylcobinamide and addition of GMP to adenosylcobinamide phosphate.</text>
</comment>
<comment type="catalytic activity">
    <reaction evidence="2 3">
        <text>adenosylcob(III)inamide + GTP = adenosylcob(III)inamide phosphate + GDP + H(+)</text>
        <dbReference type="Rhea" id="RHEA:15765"/>
        <dbReference type="ChEBI" id="CHEBI:2480"/>
        <dbReference type="ChEBI" id="CHEBI:15378"/>
        <dbReference type="ChEBI" id="CHEBI:37565"/>
        <dbReference type="ChEBI" id="CHEBI:58189"/>
        <dbReference type="ChEBI" id="CHEBI:58502"/>
        <dbReference type="EC" id="2.7.1.156"/>
    </reaction>
</comment>
<comment type="catalytic activity">
    <reaction evidence="2 3">
        <text>adenosylcob(III)inamide + ATP = adenosylcob(III)inamide phosphate + ADP + H(+)</text>
        <dbReference type="Rhea" id="RHEA:15769"/>
        <dbReference type="ChEBI" id="CHEBI:2480"/>
        <dbReference type="ChEBI" id="CHEBI:15378"/>
        <dbReference type="ChEBI" id="CHEBI:30616"/>
        <dbReference type="ChEBI" id="CHEBI:58502"/>
        <dbReference type="ChEBI" id="CHEBI:456216"/>
        <dbReference type="EC" id="2.7.1.156"/>
    </reaction>
</comment>
<comment type="catalytic activity">
    <reaction evidence="2 3">
        <text>adenosylcob(III)inamide phosphate + GTP + H(+) = adenosylcob(III)inamide-GDP + diphosphate</text>
        <dbReference type="Rhea" id="RHEA:22712"/>
        <dbReference type="ChEBI" id="CHEBI:15378"/>
        <dbReference type="ChEBI" id="CHEBI:33019"/>
        <dbReference type="ChEBI" id="CHEBI:37565"/>
        <dbReference type="ChEBI" id="CHEBI:58502"/>
        <dbReference type="ChEBI" id="CHEBI:60487"/>
        <dbReference type="EC" id="2.7.7.62"/>
    </reaction>
</comment>
<comment type="biophysicochemical properties">
    <kinetics>
        <KM evidence="3">66 uM for adenosylcobinamide</KM>
        <KM evidence="3">206 uM for ATP</KM>
        <KM evidence="3">102 uM for adenosylcobinamide phosphate</KM>
        <KM evidence="3">21.3 uM for GTP</KM>
        <text>kcat is 15.1 min(-1) for adenosylcobinamide kinase activity. kcat is 5.6 min(-1) for guanylyltransferase activity.</text>
    </kinetics>
    <phDependence>
        <text evidence="3">Optimum pH is 8.8-9.0.</text>
    </phDependence>
    <temperatureDependence>
        <text evidence="3">Optimum temperature is 37 degrees Celsius.</text>
    </temperatureDependence>
</comment>
<comment type="pathway">
    <text>Cofactor biosynthesis; adenosylcobalamin biosynthesis; adenosylcobalamin from cob(II)yrinate a,c-diamide: step 5/7.</text>
</comment>
<comment type="pathway">
    <text>Cofactor biosynthesis; adenosylcobalamin biosynthesis; adenosylcobalamin from cob(II)yrinate a,c-diamide: step 6/7.</text>
</comment>
<comment type="subunit">
    <text evidence="1 4">Homotrimer.</text>
</comment>
<comment type="similarity">
    <text evidence="5">Belongs to the CobU/CobP family.</text>
</comment>
<comment type="sequence caution" evidence="5">
    <conflict type="erroneous initiation">
        <sequence resource="EMBL-CDS" id="AAA27269"/>
    </conflict>
    <text>Truncated N-terminus.</text>
</comment>
<accession>Q05599</accession>
<sequence>MMILVTGGARSGKSRHAEALIGDAPQVLYIATSQILDDEMAARIQHHKDGRPAHWRTAECWRHLDTLITADLAPDDAILLECITTMVTNLLFALGGENDPEQWDYAAMERAIDDEIQILIAACQRCPAKVVLVTNEVGMGIVPENRLARHFRDIAGRVNQRLAAAADEVWLVVSGIGVKIK</sequence>